<dbReference type="EC" id="6.3.2.6" evidence="1"/>
<dbReference type="EMBL" id="AP006878">
    <property type="protein sequence ID" value="BAD84399.1"/>
    <property type="molecule type" value="Genomic_DNA"/>
</dbReference>
<dbReference type="RefSeq" id="WP_011249165.1">
    <property type="nucleotide sequence ID" value="NC_006624.1"/>
</dbReference>
<dbReference type="SMR" id="Q5JFN5"/>
<dbReference type="FunCoup" id="Q5JFN5">
    <property type="interactions" value="117"/>
</dbReference>
<dbReference type="STRING" id="69014.TK0210"/>
<dbReference type="EnsemblBacteria" id="BAD84399">
    <property type="protein sequence ID" value="BAD84399"/>
    <property type="gene ID" value="TK0210"/>
</dbReference>
<dbReference type="GeneID" id="78446714"/>
<dbReference type="KEGG" id="tko:TK0210"/>
<dbReference type="PATRIC" id="fig|69014.16.peg.209"/>
<dbReference type="eggNOG" id="arCOG04421">
    <property type="taxonomic scope" value="Archaea"/>
</dbReference>
<dbReference type="HOGENOM" id="CLU_061495_2_0_2"/>
<dbReference type="InParanoid" id="Q5JFN5"/>
<dbReference type="PhylomeDB" id="Q5JFN5"/>
<dbReference type="UniPathway" id="UPA00074">
    <property type="reaction ID" value="UER00131"/>
</dbReference>
<dbReference type="Proteomes" id="UP000000536">
    <property type="component" value="Chromosome"/>
</dbReference>
<dbReference type="GO" id="GO:0005524">
    <property type="term" value="F:ATP binding"/>
    <property type="evidence" value="ECO:0007669"/>
    <property type="project" value="UniProtKB-KW"/>
</dbReference>
<dbReference type="GO" id="GO:0004639">
    <property type="term" value="F:phosphoribosylaminoimidazolesuccinocarboxamide synthase activity"/>
    <property type="evidence" value="ECO:0007669"/>
    <property type="project" value="UniProtKB-UniRule"/>
</dbReference>
<dbReference type="GO" id="GO:0006189">
    <property type="term" value="P:'de novo' IMP biosynthetic process"/>
    <property type="evidence" value="ECO:0007669"/>
    <property type="project" value="UniProtKB-UniRule"/>
</dbReference>
<dbReference type="GO" id="GO:0009236">
    <property type="term" value="P:cobalamin biosynthetic process"/>
    <property type="evidence" value="ECO:0007669"/>
    <property type="project" value="InterPro"/>
</dbReference>
<dbReference type="CDD" id="cd01415">
    <property type="entry name" value="SAICAR_synt_PurC"/>
    <property type="match status" value="1"/>
</dbReference>
<dbReference type="FunFam" id="3.30.200.20:FF:000086">
    <property type="entry name" value="Phosphoribosylaminoimidazole-succinocarboxamide synthase"/>
    <property type="match status" value="1"/>
</dbReference>
<dbReference type="FunFam" id="3.30.470.20:FF:000006">
    <property type="entry name" value="Phosphoribosylaminoimidazole-succinocarboxamide synthase"/>
    <property type="match status" value="1"/>
</dbReference>
<dbReference type="Gene3D" id="3.30.470.20">
    <property type="entry name" value="ATP-grasp fold, B domain"/>
    <property type="match status" value="1"/>
</dbReference>
<dbReference type="Gene3D" id="3.30.200.20">
    <property type="entry name" value="Phosphorylase Kinase, domain 1"/>
    <property type="match status" value="1"/>
</dbReference>
<dbReference type="HAMAP" id="MF_00137">
    <property type="entry name" value="SAICAR_synth"/>
    <property type="match status" value="1"/>
</dbReference>
<dbReference type="InterPro" id="IPR028923">
    <property type="entry name" value="SAICAR_synt/ADE2_N"/>
</dbReference>
<dbReference type="InterPro" id="IPR033934">
    <property type="entry name" value="SAICAR_synt_PurC"/>
</dbReference>
<dbReference type="InterPro" id="IPR001636">
    <property type="entry name" value="SAICAR_synth"/>
</dbReference>
<dbReference type="InterPro" id="IPR050089">
    <property type="entry name" value="SAICAR_synthetase"/>
</dbReference>
<dbReference type="InterPro" id="IPR018236">
    <property type="entry name" value="SAICAR_synthetase_CS"/>
</dbReference>
<dbReference type="NCBIfam" id="TIGR00081">
    <property type="entry name" value="purC"/>
    <property type="match status" value="1"/>
</dbReference>
<dbReference type="PANTHER" id="PTHR43599">
    <property type="entry name" value="MULTIFUNCTIONAL PROTEIN ADE2"/>
    <property type="match status" value="1"/>
</dbReference>
<dbReference type="PANTHER" id="PTHR43599:SF3">
    <property type="entry name" value="SI:DKEY-6E2.2"/>
    <property type="match status" value="1"/>
</dbReference>
<dbReference type="Pfam" id="PF01259">
    <property type="entry name" value="SAICAR_synt"/>
    <property type="match status" value="1"/>
</dbReference>
<dbReference type="SUPFAM" id="SSF56104">
    <property type="entry name" value="SAICAR synthase-like"/>
    <property type="match status" value="1"/>
</dbReference>
<dbReference type="PROSITE" id="PS01057">
    <property type="entry name" value="SAICAR_SYNTHETASE_1"/>
    <property type="match status" value="1"/>
</dbReference>
<dbReference type="PROSITE" id="PS01058">
    <property type="entry name" value="SAICAR_SYNTHETASE_2"/>
    <property type="match status" value="1"/>
</dbReference>
<reference key="1">
    <citation type="journal article" date="2005" name="Genome Res.">
        <title>Complete genome sequence of the hyperthermophilic archaeon Thermococcus kodakaraensis KOD1 and comparison with Pyrococcus genomes.</title>
        <authorList>
            <person name="Fukui T."/>
            <person name="Atomi H."/>
            <person name="Kanai T."/>
            <person name="Matsumi R."/>
            <person name="Fujiwara S."/>
            <person name="Imanaka T."/>
        </authorList>
    </citation>
    <scope>NUCLEOTIDE SEQUENCE [LARGE SCALE GENOMIC DNA]</scope>
    <source>
        <strain>ATCC BAA-918 / JCM 12380 / KOD1</strain>
    </source>
</reference>
<organism>
    <name type="scientific">Thermococcus kodakarensis (strain ATCC BAA-918 / JCM 12380 / KOD1)</name>
    <name type="common">Pyrococcus kodakaraensis (strain KOD1)</name>
    <dbReference type="NCBI Taxonomy" id="69014"/>
    <lineage>
        <taxon>Archaea</taxon>
        <taxon>Methanobacteriati</taxon>
        <taxon>Methanobacteriota</taxon>
        <taxon>Thermococci</taxon>
        <taxon>Thermococcales</taxon>
        <taxon>Thermococcaceae</taxon>
        <taxon>Thermococcus</taxon>
    </lineage>
</organism>
<protein>
    <recommendedName>
        <fullName evidence="1">Phosphoribosylaminoimidazole-succinocarboxamide synthase</fullName>
        <ecNumber evidence="1">6.3.2.6</ecNumber>
    </recommendedName>
    <alternativeName>
        <fullName evidence="1">SAICAR synthetase</fullName>
    </alternativeName>
</protein>
<sequence>MDVYEGKAKKIIPLDDGKVIMEFKDDATAFNGEKKAQFRGKGWLNAQISAHLFRVLEASGIKTHFIGVAGDNRLIVERLKMYPLEVVVRNVVAGSLKKRLPLEEGTELPEPIIEFYYKNDDLGDPMINQYHARVLGVGESELKEMEKIALQVNDVLRKYFAERGIILVDFKLEFGKNTRGEIVLGDEISPDTCRFWDAETKESLDKDVFRFGKGDLISAYERLYERITGEAPVRR</sequence>
<gene>
    <name evidence="1" type="primary">purC</name>
    <name type="ordered locus">TK0210</name>
</gene>
<accession>Q5JFN5</accession>
<evidence type="ECO:0000255" key="1">
    <source>
        <dbReference type="HAMAP-Rule" id="MF_00137"/>
    </source>
</evidence>
<name>PUR7_THEKO</name>
<feature type="chain" id="PRO_0000100917" description="Phosphoribosylaminoimidazole-succinocarboxamide synthase">
    <location>
        <begin position="1"/>
        <end position="235"/>
    </location>
</feature>
<comment type="catalytic activity">
    <reaction evidence="1">
        <text>5-amino-1-(5-phospho-D-ribosyl)imidazole-4-carboxylate + L-aspartate + ATP = (2S)-2-[5-amino-1-(5-phospho-beta-D-ribosyl)imidazole-4-carboxamido]succinate + ADP + phosphate + 2 H(+)</text>
        <dbReference type="Rhea" id="RHEA:22628"/>
        <dbReference type="ChEBI" id="CHEBI:15378"/>
        <dbReference type="ChEBI" id="CHEBI:29991"/>
        <dbReference type="ChEBI" id="CHEBI:30616"/>
        <dbReference type="ChEBI" id="CHEBI:43474"/>
        <dbReference type="ChEBI" id="CHEBI:58443"/>
        <dbReference type="ChEBI" id="CHEBI:77657"/>
        <dbReference type="ChEBI" id="CHEBI:456216"/>
        <dbReference type="EC" id="6.3.2.6"/>
    </reaction>
</comment>
<comment type="pathway">
    <text evidence="1">Purine metabolism; IMP biosynthesis via de novo pathway; 5-amino-1-(5-phospho-D-ribosyl)imidazole-4-carboxamide from 5-amino-1-(5-phospho-D-ribosyl)imidazole-4-carboxylate: step 1/2.</text>
</comment>
<comment type="similarity">
    <text evidence="1">Belongs to the SAICAR synthetase family.</text>
</comment>
<proteinExistence type="inferred from homology"/>
<keyword id="KW-0067">ATP-binding</keyword>
<keyword id="KW-0436">Ligase</keyword>
<keyword id="KW-0547">Nucleotide-binding</keyword>
<keyword id="KW-0658">Purine biosynthesis</keyword>
<keyword id="KW-1185">Reference proteome</keyword>